<comment type="function">
    <text evidence="1">Converts N-acetylmannosamine-6-phosphate (ManNAc-6-P) to N-acetylglucosamine-6-phosphate (GlcNAc-6-P).</text>
</comment>
<comment type="catalytic activity">
    <reaction evidence="1">
        <text>an N-acyl-D-glucosamine 6-phosphate = an N-acyl-D-mannosamine 6-phosphate</text>
        <dbReference type="Rhea" id="RHEA:23932"/>
        <dbReference type="ChEBI" id="CHEBI:57599"/>
        <dbReference type="ChEBI" id="CHEBI:57666"/>
        <dbReference type="EC" id="5.1.3.9"/>
    </reaction>
</comment>
<comment type="pathway">
    <text evidence="1">Amino-sugar metabolism; N-acetylneuraminate degradation; D-fructose 6-phosphate from N-acetylneuraminate: step 3/5.</text>
</comment>
<comment type="similarity">
    <text evidence="1">Belongs to the NanE family.</text>
</comment>
<proteinExistence type="inferred from homology"/>
<name>NANE_ECO8A</name>
<gene>
    <name evidence="1" type="primary">nanE</name>
    <name type="ordered locus">ECIAI1_3365</name>
</gene>
<protein>
    <recommendedName>
        <fullName evidence="1">Putative N-acetylmannosamine-6-phosphate 2-epimerase</fullName>
        <ecNumber evidence="1">5.1.3.9</ecNumber>
    </recommendedName>
    <alternativeName>
        <fullName evidence="1">ManNAc-6-P epimerase</fullName>
    </alternativeName>
</protein>
<feature type="chain" id="PRO_1000139706" description="Putative N-acetylmannosamine-6-phosphate 2-epimerase">
    <location>
        <begin position="1"/>
        <end position="229"/>
    </location>
</feature>
<dbReference type="EC" id="5.1.3.9" evidence="1"/>
<dbReference type="EMBL" id="CU928160">
    <property type="protein sequence ID" value="CAR00179.1"/>
    <property type="molecule type" value="Genomic_DNA"/>
</dbReference>
<dbReference type="RefSeq" id="WP_000054239.1">
    <property type="nucleotide sequence ID" value="NC_011741.1"/>
</dbReference>
<dbReference type="SMR" id="B7M0T5"/>
<dbReference type="KEGG" id="ecr:ECIAI1_3365"/>
<dbReference type="HOGENOM" id="CLU_086300_0_0_6"/>
<dbReference type="UniPathway" id="UPA00629">
    <property type="reaction ID" value="UER00682"/>
</dbReference>
<dbReference type="GO" id="GO:0005829">
    <property type="term" value="C:cytosol"/>
    <property type="evidence" value="ECO:0007669"/>
    <property type="project" value="TreeGrafter"/>
</dbReference>
<dbReference type="GO" id="GO:0047465">
    <property type="term" value="F:N-acylglucosamine-6-phosphate 2-epimerase activity"/>
    <property type="evidence" value="ECO:0007669"/>
    <property type="project" value="UniProtKB-EC"/>
</dbReference>
<dbReference type="GO" id="GO:0005975">
    <property type="term" value="P:carbohydrate metabolic process"/>
    <property type="evidence" value="ECO:0007669"/>
    <property type="project" value="UniProtKB-UniRule"/>
</dbReference>
<dbReference type="GO" id="GO:0006053">
    <property type="term" value="P:N-acetylmannosamine catabolic process"/>
    <property type="evidence" value="ECO:0007669"/>
    <property type="project" value="TreeGrafter"/>
</dbReference>
<dbReference type="GO" id="GO:0019262">
    <property type="term" value="P:N-acetylneuraminate catabolic process"/>
    <property type="evidence" value="ECO:0007669"/>
    <property type="project" value="UniProtKB-UniRule"/>
</dbReference>
<dbReference type="CDD" id="cd04729">
    <property type="entry name" value="NanE"/>
    <property type="match status" value="1"/>
</dbReference>
<dbReference type="FunFam" id="3.20.20.70:FF:000035">
    <property type="entry name" value="Putative N-acetylmannosamine-6-phosphate 2-epimerase"/>
    <property type="match status" value="1"/>
</dbReference>
<dbReference type="Gene3D" id="3.20.20.70">
    <property type="entry name" value="Aldolase class I"/>
    <property type="match status" value="1"/>
</dbReference>
<dbReference type="HAMAP" id="MF_01235">
    <property type="entry name" value="ManNAc6P_epimer"/>
    <property type="match status" value="1"/>
</dbReference>
<dbReference type="InterPro" id="IPR013785">
    <property type="entry name" value="Aldolase_TIM"/>
</dbReference>
<dbReference type="InterPro" id="IPR007260">
    <property type="entry name" value="NanE"/>
</dbReference>
<dbReference type="InterPro" id="IPR011060">
    <property type="entry name" value="RibuloseP-bd_barrel"/>
</dbReference>
<dbReference type="NCBIfam" id="NF002231">
    <property type="entry name" value="PRK01130.1"/>
    <property type="match status" value="1"/>
</dbReference>
<dbReference type="PANTHER" id="PTHR36204">
    <property type="entry name" value="N-ACETYLMANNOSAMINE-6-PHOSPHATE 2-EPIMERASE-RELATED"/>
    <property type="match status" value="1"/>
</dbReference>
<dbReference type="PANTHER" id="PTHR36204:SF1">
    <property type="entry name" value="N-ACETYLMANNOSAMINE-6-PHOSPHATE 2-EPIMERASE-RELATED"/>
    <property type="match status" value="1"/>
</dbReference>
<dbReference type="Pfam" id="PF04131">
    <property type="entry name" value="NanE"/>
    <property type="match status" value="1"/>
</dbReference>
<dbReference type="SUPFAM" id="SSF51366">
    <property type="entry name" value="Ribulose-phoshate binding barrel"/>
    <property type="match status" value="1"/>
</dbReference>
<accession>B7M0T5</accession>
<evidence type="ECO:0000255" key="1">
    <source>
        <dbReference type="HAMAP-Rule" id="MF_01235"/>
    </source>
</evidence>
<keyword id="KW-0119">Carbohydrate metabolism</keyword>
<keyword id="KW-0413">Isomerase</keyword>
<reference key="1">
    <citation type="journal article" date="2009" name="PLoS Genet.">
        <title>Organised genome dynamics in the Escherichia coli species results in highly diverse adaptive paths.</title>
        <authorList>
            <person name="Touchon M."/>
            <person name="Hoede C."/>
            <person name="Tenaillon O."/>
            <person name="Barbe V."/>
            <person name="Baeriswyl S."/>
            <person name="Bidet P."/>
            <person name="Bingen E."/>
            <person name="Bonacorsi S."/>
            <person name="Bouchier C."/>
            <person name="Bouvet O."/>
            <person name="Calteau A."/>
            <person name="Chiapello H."/>
            <person name="Clermont O."/>
            <person name="Cruveiller S."/>
            <person name="Danchin A."/>
            <person name="Diard M."/>
            <person name="Dossat C."/>
            <person name="Karoui M.E."/>
            <person name="Frapy E."/>
            <person name="Garry L."/>
            <person name="Ghigo J.M."/>
            <person name="Gilles A.M."/>
            <person name="Johnson J."/>
            <person name="Le Bouguenec C."/>
            <person name="Lescat M."/>
            <person name="Mangenot S."/>
            <person name="Martinez-Jehanne V."/>
            <person name="Matic I."/>
            <person name="Nassif X."/>
            <person name="Oztas S."/>
            <person name="Petit M.A."/>
            <person name="Pichon C."/>
            <person name="Rouy Z."/>
            <person name="Ruf C.S."/>
            <person name="Schneider D."/>
            <person name="Tourret J."/>
            <person name="Vacherie B."/>
            <person name="Vallenet D."/>
            <person name="Medigue C."/>
            <person name="Rocha E.P.C."/>
            <person name="Denamur E."/>
        </authorList>
    </citation>
    <scope>NUCLEOTIDE SEQUENCE [LARGE SCALE GENOMIC DNA]</scope>
    <source>
        <strain>IAI1</strain>
    </source>
</reference>
<sequence length="229" mass="24074">MSLLAQLDQKIAANGGLIVSCQPVPDSPLDKPEIVAAMALAAEQAGAVAIRIEGVANLQATRAVVSVPIIGIVKRDLEDSPVRITAYIEDVDALAQAGADIIAIDGTDRPRPVPVETLLARIHHHGLLAMTDCSTPEDGLACQKLGAEIIGTTLSGYTTPETPEEPDLALVKTLSDAGCRVIAEGRYNTPAQAADAMRHGAWAVTVGSAITRLEHICQWYNTAMKKAVL</sequence>
<organism>
    <name type="scientific">Escherichia coli O8 (strain IAI1)</name>
    <dbReference type="NCBI Taxonomy" id="585034"/>
    <lineage>
        <taxon>Bacteria</taxon>
        <taxon>Pseudomonadati</taxon>
        <taxon>Pseudomonadota</taxon>
        <taxon>Gammaproteobacteria</taxon>
        <taxon>Enterobacterales</taxon>
        <taxon>Enterobacteriaceae</taxon>
        <taxon>Escherichia</taxon>
    </lineage>
</organism>